<gene>
    <name evidence="1" type="primary">gltX</name>
    <name type="ordered locus">HY04AAS1_0670</name>
</gene>
<name>SYE_HYDS0</name>
<evidence type="ECO:0000255" key="1">
    <source>
        <dbReference type="HAMAP-Rule" id="MF_00022"/>
    </source>
</evidence>
<sequence length="464" mass="53877">MVRTRFAPSPTGYMHLGNARTGIFSYLFARHHNGTFVLRIEDTDRERSTKEFEDSIIEDLKWLGIEWDEFYRQSERFDIYKEYAKKLIDSGHAYYCFCKEEDIEKQREEAYAQGKAYRYPGTCRHLSKEDVEDRLKSGESYVIRFKVPDGQIVSFEDMIRGNISINVDDFGDFVIVRSDGSSVYNFVAVIDDALMKITHVIRGEDHISNTPKQILIYEALGFKPPEFAHLPVILGEDRTKLSKRHGGVSVRFYKENGYCPEALFNYLCLLGWSSEKVGKEVISKEEAVKYFDIKDINLSPAVFSHDKLYWLNGVYIREILPEDRLLEDLLSFLEKAYGTVDIEYLKKIVKATRKEYNTYLEAVEKLRPFFKEKELDEVAKEELSKIDRKVFELLKQEIESLEEITPENLKGVVKNIQKSTSLKPKDVWHALRIALTGSLEGIAIDVIASILPKEEVLKRLSRYT</sequence>
<feature type="chain" id="PRO_0000367690" description="Glutamate--tRNA ligase">
    <location>
        <begin position="1"/>
        <end position="464"/>
    </location>
</feature>
<feature type="short sequence motif" description="'HIGH' region" evidence="1">
    <location>
        <begin position="8"/>
        <end position="18"/>
    </location>
</feature>
<feature type="short sequence motif" description="'KMSKS' region" evidence="1">
    <location>
        <begin position="240"/>
        <end position="244"/>
    </location>
</feature>
<feature type="binding site" evidence="1">
    <location>
        <position position="96"/>
    </location>
    <ligand>
        <name>Zn(2+)</name>
        <dbReference type="ChEBI" id="CHEBI:29105"/>
    </ligand>
</feature>
<feature type="binding site" evidence="1">
    <location>
        <position position="98"/>
    </location>
    <ligand>
        <name>Zn(2+)</name>
        <dbReference type="ChEBI" id="CHEBI:29105"/>
    </ligand>
</feature>
<feature type="binding site" evidence="1">
    <location>
        <position position="123"/>
    </location>
    <ligand>
        <name>Zn(2+)</name>
        <dbReference type="ChEBI" id="CHEBI:29105"/>
    </ligand>
</feature>
<feature type="binding site" evidence="1">
    <location>
        <position position="125"/>
    </location>
    <ligand>
        <name>Zn(2+)</name>
        <dbReference type="ChEBI" id="CHEBI:29105"/>
    </ligand>
</feature>
<feature type="binding site" evidence="1">
    <location>
        <position position="243"/>
    </location>
    <ligand>
        <name>ATP</name>
        <dbReference type="ChEBI" id="CHEBI:30616"/>
    </ligand>
</feature>
<accession>B4U896</accession>
<reference key="1">
    <citation type="journal article" date="2009" name="J. Bacteriol.">
        <title>Complete and draft genome sequences of six members of the Aquificales.</title>
        <authorList>
            <person name="Reysenbach A.-L."/>
            <person name="Hamamura N."/>
            <person name="Podar M."/>
            <person name="Griffiths E."/>
            <person name="Ferreira S."/>
            <person name="Hochstein R."/>
            <person name="Heidelberg J."/>
            <person name="Johnson J."/>
            <person name="Mead D."/>
            <person name="Pohorille A."/>
            <person name="Sarmiento M."/>
            <person name="Schweighofer K."/>
            <person name="Seshadri R."/>
            <person name="Voytek M.A."/>
        </authorList>
    </citation>
    <scope>NUCLEOTIDE SEQUENCE [LARGE SCALE GENOMIC DNA]</scope>
    <source>
        <strain>Y04AAS1</strain>
    </source>
</reference>
<proteinExistence type="inferred from homology"/>
<protein>
    <recommendedName>
        <fullName evidence="1">Glutamate--tRNA ligase</fullName>
        <ecNumber evidence="1">6.1.1.17</ecNumber>
    </recommendedName>
    <alternativeName>
        <fullName evidence="1">Glutamyl-tRNA synthetase</fullName>
        <shortName evidence="1">GluRS</shortName>
    </alternativeName>
</protein>
<organism>
    <name type="scientific">Hydrogenobaculum sp. (strain Y04AAS1)</name>
    <dbReference type="NCBI Taxonomy" id="380749"/>
    <lineage>
        <taxon>Bacteria</taxon>
        <taxon>Pseudomonadati</taxon>
        <taxon>Aquificota</taxon>
        <taxon>Aquificia</taxon>
        <taxon>Aquificales</taxon>
        <taxon>Aquificaceae</taxon>
        <taxon>Hydrogenobaculum</taxon>
    </lineage>
</organism>
<dbReference type="EC" id="6.1.1.17" evidence="1"/>
<dbReference type="EMBL" id="CP001130">
    <property type="protein sequence ID" value="ACG57357.1"/>
    <property type="molecule type" value="Genomic_DNA"/>
</dbReference>
<dbReference type="RefSeq" id="WP_012513713.1">
    <property type="nucleotide sequence ID" value="NC_011126.1"/>
</dbReference>
<dbReference type="SMR" id="B4U896"/>
<dbReference type="STRING" id="380749.HY04AAS1_0670"/>
<dbReference type="KEGG" id="hya:HY04AAS1_0670"/>
<dbReference type="eggNOG" id="COG0008">
    <property type="taxonomic scope" value="Bacteria"/>
</dbReference>
<dbReference type="HOGENOM" id="CLU_015768_6_3_0"/>
<dbReference type="OrthoDB" id="9801560at2"/>
<dbReference type="GO" id="GO:0005829">
    <property type="term" value="C:cytosol"/>
    <property type="evidence" value="ECO:0007669"/>
    <property type="project" value="TreeGrafter"/>
</dbReference>
<dbReference type="GO" id="GO:0005524">
    <property type="term" value="F:ATP binding"/>
    <property type="evidence" value="ECO:0007669"/>
    <property type="project" value="UniProtKB-UniRule"/>
</dbReference>
<dbReference type="GO" id="GO:0004818">
    <property type="term" value="F:glutamate-tRNA ligase activity"/>
    <property type="evidence" value="ECO:0007669"/>
    <property type="project" value="UniProtKB-UniRule"/>
</dbReference>
<dbReference type="GO" id="GO:0000049">
    <property type="term" value="F:tRNA binding"/>
    <property type="evidence" value="ECO:0007669"/>
    <property type="project" value="InterPro"/>
</dbReference>
<dbReference type="GO" id="GO:0008270">
    <property type="term" value="F:zinc ion binding"/>
    <property type="evidence" value="ECO:0007669"/>
    <property type="project" value="UniProtKB-UniRule"/>
</dbReference>
<dbReference type="GO" id="GO:0006424">
    <property type="term" value="P:glutamyl-tRNA aminoacylation"/>
    <property type="evidence" value="ECO:0007669"/>
    <property type="project" value="UniProtKB-UniRule"/>
</dbReference>
<dbReference type="CDD" id="cd00808">
    <property type="entry name" value="GluRS_core"/>
    <property type="match status" value="1"/>
</dbReference>
<dbReference type="FunFam" id="3.40.50.620:FF:000007">
    <property type="entry name" value="Glutamate--tRNA ligase"/>
    <property type="match status" value="1"/>
</dbReference>
<dbReference type="Gene3D" id="1.10.10.350">
    <property type="match status" value="1"/>
</dbReference>
<dbReference type="Gene3D" id="3.40.50.620">
    <property type="entry name" value="HUPs"/>
    <property type="match status" value="1"/>
</dbReference>
<dbReference type="HAMAP" id="MF_00022">
    <property type="entry name" value="Glu_tRNA_synth_type1"/>
    <property type="match status" value="1"/>
</dbReference>
<dbReference type="InterPro" id="IPR045462">
    <property type="entry name" value="aa-tRNA-synth_I_cd-bd"/>
</dbReference>
<dbReference type="InterPro" id="IPR020751">
    <property type="entry name" value="aa-tRNA-synth_I_codon-bd_sub2"/>
</dbReference>
<dbReference type="InterPro" id="IPR001412">
    <property type="entry name" value="aa-tRNA-synth_I_CS"/>
</dbReference>
<dbReference type="InterPro" id="IPR008925">
    <property type="entry name" value="aa_tRNA-synth_I_cd-bd_sf"/>
</dbReference>
<dbReference type="InterPro" id="IPR004527">
    <property type="entry name" value="Glu-tRNA-ligase_bac/mito"/>
</dbReference>
<dbReference type="InterPro" id="IPR000924">
    <property type="entry name" value="Glu/Gln-tRNA-synth"/>
</dbReference>
<dbReference type="InterPro" id="IPR020058">
    <property type="entry name" value="Glu/Gln-tRNA-synth_Ib_cat-dom"/>
</dbReference>
<dbReference type="InterPro" id="IPR049940">
    <property type="entry name" value="GluQ/Sye"/>
</dbReference>
<dbReference type="InterPro" id="IPR033910">
    <property type="entry name" value="GluRS_core"/>
</dbReference>
<dbReference type="InterPro" id="IPR014729">
    <property type="entry name" value="Rossmann-like_a/b/a_fold"/>
</dbReference>
<dbReference type="NCBIfam" id="TIGR00464">
    <property type="entry name" value="gltX_bact"/>
    <property type="match status" value="1"/>
</dbReference>
<dbReference type="NCBIfam" id="NF004315">
    <property type="entry name" value="PRK05710.1-4"/>
    <property type="match status" value="1"/>
</dbReference>
<dbReference type="PANTHER" id="PTHR43311">
    <property type="entry name" value="GLUTAMATE--TRNA LIGASE"/>
    <property type="match status" value="1"/>
</dbReference>
<dbReference type="PANTHER" id="PTHR43311:SF2">
    <property type="entry name" value="GLUTAMATE--TRNA LIGASE, MITOCHONDRIAL-RELATED"/>
    <property type="match status" value="1"/>
</dbReference>
<dbReference type="Pfam" id="PF19269">
    <property type="entry name" value="Anticodon_2"/>
    <property type="match status" value="1"/>
</dbReference>
<dbReference type="Pfam" id="PF00749">
    <property type="entry name" value="tRNA-synt_1c"/>
    <property type="match status" value="1"/>
</dbReference>
<dbReference type="PRINTS" id="PR00987">
    <property type="entry name" value="TRNASYNTHGLU"/>
</dbReference>
<dbReference type="SUPFAM" id="SSF48163">
    <property type="entry name" value="An anticodon-binding domain of class I aminoacyl-tRNA synthetases"/>
    <property type="match status" value="1"/>
</dbReference>
<dbReference type="SUPFAM" id="SSF52374">
    <property type="entry name" value="Nucleotidylyl transferase"/>
    <property type="match status" value="1"/>
</dbReference>
<dbReference type="PROSITE" id="PS00178">
    <property type="entry name" value="AA_TRNA_LIGASE_I"/>
    <property type="match status" value="1"/>
</dbReference>
<keyword id="KW-0030">Aminoacyl-tRNA synthetase</keyword>
<keyword id="KW-0067">ATP-binding</keyword>
<keyword id="KW-0963">Cytoplasm</keyword>
<keyword id="KW-0436">Ligase</keyword>
<keyword id="KW-0479">Metal-binding</keyword>
<keyword id="KW-0547">Nucleotide-binding</keyword>
<keyword id="KW-0648">Protein biosynthesis</keyword>
<keyword id="KW-0862">Zinc</keyword>
<comment type="function">
    <text evidence="1">Catalyzes the attachment of glutamate to tRNA(Glu) in a two-step reaction: glutamate is first activated by ATP to form Glu-AMP and then transferred to the acceptor end of tRNA(Glu).</text>
</comment>
<comment type="catalytic activity">
    <reaction evidence="1">
        <text>tRNA(Glu) + L-glutamate + ATP = L-glutamyl-tRNA(Glu) + AMP + diphosphate</text>
        <dbReference type="Rhea" id="RHEA:23540"/>
        <dbReference type="Rhea" id="RHEA-COMP:9663"/>
        <dbReference type="Rhea" id="RHEA-COMP:9680"/>
        <dbReference type="ChEBI" id="CHEBI:29985"/>
        <dbReference type="ChEBI" id="CHEBI:30616"/>
        <dbReference type="ChEBI" id="CHEBI:33019"/>
        <dbReference type="ChEBI" id="CHEBI:78442"/>
        <dbReference type="ChEBI" id="CHEBI:78520"/>
        <dbReference type="ChEBI" id="CHEBI:456215"/>
        <dbReference type="EC" id="6.1.1.17"/>
    </reaction>
</comment>
<comment type="cofactor">
    <cofactor evidence="1">
        <name>Zn(2+)</name>
        <dbReference type="ChEBI" id="CHEBI:29105"/>
    </cofactor>
    <text evidence="1">Binds 1 zinc ion per subunit.</text>
</comment>
<comment type="subunit">
    <text evidence="1">Monomer.</text>
</comment>
<comment type="subcellular location">
    <subcellularLocation>
        <location evidence="1">Cytoplasm</location>
    </subcellularLocation>
</comment>
<comment type="similarity">
    <text evidence="1">Belongs to the class-I aminoacyl-tRNA synthetase family. Glutamate--tRNA ligase type 1 subfamily.</text>
</comment>